<proteinExistence type="inferred from homology"/>
<organism>
    <name type="scientific">Escherichia coli O9:H4 (strain HS)</name>
    <dbReference type="NCBI Taxonomy" id="331112"/>
    <lineage>
        <taxon>Bacteria</taxon>
        <taxon>Pseudomonadati</taxon>
        <taxon>Pseudomonadota</taxon>
        <taxon>Gammaproteobacteria</taxon>
        <taxon>Enterobacterales</taxon>
        <taxon>Enterobacteriaceae</taxon>
        <taxon>Escherichia</taxon>
    </lineage>
</organism>
<protein>
    <recommendedName>
        <fullName evidence="1">Octanoyltransferase</fullName>
        <ecNumber evidence="1">2.3.1.181</ecNumber>
    </recommendedName>
    <alternativeName>
        <fullName evidence="1">Lipoate-protein ligase B</fullName>
    </alternativeName>
    <alternativeName>
        <fullName evidence="1">Lipoyl/octanoyl transferase</fullName>
    </alternativeName>
    <alternativeName>
        <fullName evidence="1">Octanoyl-[acyl-carrier-protein]-protein N-octanoyltransferase</fullName>
    </alternativeName>
</protein>
<evidence type="ECO:0000255" key="1">
    <source>
        <dbReference type="HAMAP-Rule" id="MF_00013"/>
    </source>
</evidence>
<evidence type="ECO:0000255" key="2">
    <source>
        <dbReference type="PROSITE-ProRule" id="PRU01067"/>
    </source>
</evidence>
<name>LIPB_ECOHS</name>
<comment type="function">
    <text evidence="1">Catalyzes the transfer of endogenously produced octanoic acid from octanoyl-acyl-carrier-protein onto the lipoyl domains of lipoate-dependent enzymes. Lipoyl-ACP can also act as a substrate although octanoyl-ACP is likely to be the physiological substrate.</text>
</comment>
<comment type="catalytic activity">
    <reaction evidence="1">
        <text>octanoyl-[ACP] + L-lysyl-[protein] = N(6)-octanoyl-L-lysyl-[protein] + holo-[ACP] + H(+)</text>
        <dbReference type="Rhea" id="RHEA:17665"/>
        <dbReference type="Rhea" id="RHEA-COMP:9636"/>
        <dbReference type="Rhea" id="RHEA-COMP:9685"/>
        <dbReference type="Rhea" id="RHEA-COMP:9752"/>
        <dbReference type="Rhea" id="RHEA-COMP:9928"/>
        <dbReference type="ChEBI" id="CHEBI:15378"/>
        <dbReference type="ChEBI" id="CHEBI:29969"/>
        <dbReference type="ChEBI" id="CHEBI:64479"/>
        <dbReference type="ChEBI" id="CHEBI:78463"/>
        <dbReference type="ChEBI" id="CHEBI:78809"/>
        <dbReference type="EC" id="2.3.1.181"/>
    </reaction>
</comment>
<comment type="pathway">
    <text evidence="1">Protein modification; protein lipoylation via endogenous pathway; protein N(6)-(lipoyl)lysine from octanoyl-[acyl-carrier-protein]: step 1/2.</text>
</comment>
<comment type="subcellular location">
    <subcellularLocation>
        <location evidence="1">Cytoplasm</location>
    </subcellularLocation>
</comment>
<comment type="miscellaneous">
    <text evidence="1">In the reaction, the free carboxyl group of octanoic acid is attached via an amide linkage to the epsilon-amino group of a specific lysine residue of lipoyl domains of lipoate-dependent enzymes.</text>
</comment>
<comment type="similarity">
    <text evidence="1">Belongs to the LipB family.</text>
</comment>
<reference key="1">
    <citation type="journal article" date="2008" name="J. Bacteriol.">
        <title>The pangenome structure of Escherichia coli: comparative genomic analysis of E. coli commensal and pathogenic isolates.</title>
        <authorList>
            <person name="Rasko D.A."/>
            <person name="Rosovitz M.J."/>
            <person name="Myers G.S.A."/>
            <person name="Mongodin E.F."/>
            <person name="Fricke W.F."/>
            <person name="Gajer P."/>
            <person name="Crabtree J."/>
            <person name="Sebaihia M."/>
            <person name="Thomson N.R."/>
            <person name="Chaudhuri R."/>
            <person name="Henderson I.R."/>
            <person name="Sperandio V."/>
            <person name="Ravel J."/>
        </authorList>
    </citation>
    <scope>NUCLEOTIDE SEQUENCE [LARGE SCALE GENOMIC DNA]</scope>
    <source>
        <strain>HS</strain>
    </source>
</reference>
<dbReference type="EC" id="2.3.1.181" evidence="1"/>
<dbReference type="EMBL" id="CP000802">
    <property type="protein sequence ID" value="ABV05061.1"/>
    <property type="molecule type" value="Genomic_DNA"/>
</dbReference>
<dbReference type="RefSeq" id="WP_000284027.1">
    <property type="nucleotide sequence ID" value="NC_009800.1"/>
</dbReference>
<dbReference type="SMR" id="A7ZXQ7"/>
<dbReference type="GeneID" id="93776852"/>
<dbReference type="KEGG" id="ecx:EcHS_A0682"/>
<dbReference type="HOGENOM" id="CLU_035168_3_1_6"/>
<dbReference type="UniPathway" id="UPA00538">
    <property type="reaction ID" value="UER00592"/>
</dbReference>
<dbReference type="GO" id="GO:0005737">
    <property type="term" value="C:cytoplasm"/>
    <property type="evidence" value="ECO:0007669"/>
    <property type="project" value="UniProtKB-SubCell"/>
</dbReference>
<dbReference type="GO" id="GO:0033819">
    <property type="term" value="F:lipoyl(octanoyl) transferase activity"/>
    <property type="evidence" value="ECO:0007669"/>
    <property type="project" value="UniProtKB-EC"/>
</dbReference>
<dbReference type="GO" id="GO:0036211">
    <property type="term" value="P:protein modification process"/>
    <property type="evidence" value="ECO:0007669"/>
    <property type="project" value="InterPro"/>
</dbReference>
<dbReference type="CDD" id="cd16444">
    <property type="entry name" value="LipB"/>
    <property type="match status" value="1"/>
</dbReference>
<dbReference type="FunFam" id="3.30.930.10:FF:000020">
    <property type="entry name" value="Octanoyltransferase"/>
    <property type="match status" value="1"/>
</dbReference>
<dbReference type="Gene3D" id="3.30.930.10">
    <property type="entry name" value="Bira Bifunctional Protein, Domain 2"/>
    <property type="match status" value="1"/>
</dbReference>
<dbReference type="HAMAP" id="MF_00013">
    <property type="entry name" value="LipB"/>
    <property type="match status" value="1"/>
</dbReference>
<dbReference type="InterPro" id="IPR045864">
    <property type="entry name" value="aa-tRNA-synth_II/BPL/LPL"/>
</dbReference>
<dbReference type="InterPro" id="IPR004143">
    <property type="entry name" value="BPL_LPL_catalytic"/>
</dbReference>
<dbReference type="InterPro" id="IPR000544">
    <property type="entry name" value="Octanoyltransferase"/>
</dbReference>
<dbReference type="InterPro" id="IPR020605">
    <property type="entry name" value="Octanoyltransferase_CS"/>
</dbReference>
<dbReference type="NCBIfam" id="TIGR00214">
    <property type="entry name" value="lipB"/>
    <property type="match status" value="1"/>
</dbReference>
<dbReference type="NCBIfam" id="NF010922">
    <property type="entry name" value="PRK14342.1"/>
    <property type="match status" value="1"/>
</dbReference>
<dbReference type="PANTHER" id="PTHR10993:SF7">
    <property type="entry name" value="LIPOYLTRANSFERASE 2, MITOCHONDRIAL-RELATED"/>
    <property type="match status" value="1"/>
</dbReference>
<dbReference type="PANTHER" id="PTHR10993">
    <property type="entry name" value="OCTANOYLTRANSFERASE"/>
    <property type="match status" value="1"/>
</dbReference>
<dbReference type="Pfam" id="PF21948">
    <property type="entry name" value="LplA-B_cat"/>
    <property type="match status" value="1"/>
</dbReference>
<dbReference type="PIRSF" id="PIRSF016262">
    <property type="entry name" value="LPLase"/>
    <property type="match status" value="1"/>
</dbReference>
<dbReference type="SUPFAM" id="SSF55681">
    <property type="entry name" value="Class II aaRS and biotin synthetases"/>
    <property type="match status" value="1"/>
</dbReference>
<dbReference type="PROSITE" id="PS51733">
    <property type="entry name" value="BPL_LPL_CATALYTIC"/>
    <property type="match status" value="1"/>
</dbReference>
<dbReference type="PROSITE" id="PS01313">
    <property type="entry name" value="LIPB"/>
    <property type="match status" value="1"/>
</dbReference>
<feature type="chain" id="PRO_1000057104" description="Octanoyltransferase">
    <location>
        <begin position="1"/>
        <end position="213"/>
    </location>
</feature>
<feature type="domain" description="BPL/LPL catalytic" evidence="2">
    <location>
        <begin position="32"/>
        <end position="207"/>
    </location>
</feature>
<feature type="active site" description="Acyl-thioester intermediate" evidence="1">
    <location>
        <position position="169"/>
    </location>
</feature>
<feature type="binding site" evidence="1">
    <location>
        <begin position="71"/>
        <end position="78"/>
    </location>
    <ligand>
        <name>substrate</name>
    </ligand>
</feature>
<feature type="binding site" evidence="1">
    <location>
        <begin position="138"/>
        <end position="140"/>
    </location>
    <ligand>
        <name>substrate</name>
    </ligand>
</feature>
<feature type="binding site" evidence="1">
    <location>
        <begin position="151"/>
        <end position="153"/>
    </location>
    <ligand>
        <name>substrate</name>
    </ligand>
</feature>
<feature type="site" description="Lowers pKa of active site Cys" evidence="1">
    <location>
        <position position="135"/>
    </location>
</feature>
<sequence>MYQDKILVRQLGLQPYEPISQAMHEFTDTRDDSTLDEIWLVEHYPVFTQGQAGKAEHILMPGDIPVIQSDRGGQVTYHGPGQQVMYVLLNLKRRKLGVRELVTLLEQTVVNTLAELGIEAHPRADAPGVYVGEKKICSLGLRIRRGCSFHGLALNVNMDLSPFLRINPCGYAGMEMAKISQWKPEATTNNIAPRLLENILALLNNPDFEYITA</sequence>
<keyword id="KW-0012">Acyltransferase</keyword>
<keyword id="KW-0963">Cytoplasm</keyword>
<keyword id="KW-0808">Transferase</keyword>
<accession>A7ZXQ7</accession>
<gene>
    <name evidence="1" type="primary">lipB</name>
    <name type="ordered locus">EcHS_A0682</name>
</gene>